<organism>
    <name type="scientific">Phaeosphaeria nodorum (strain SN15 / ATCC MYA-4574 / FGSC 10173)</name>
    <name type="common">Glume blotch fungus</name>
    <name type="synonym">Parastagonospora nodorum</name>
    <dbReference type="NCBI Taxonomy" id="321614"/>
    <lineage>
        <taxon>Eukaryota</taxon>
        <taxon>Fungi</taxon>
        <taxon>Dikarya</taxon>
        <taxon>Ascomycota</taxon>
        <taxon>Pezizomycotina</taxon>
        <taxon>Dothideomycetes</taxon>
        <taxon>Pleosporomycetidae</taxon>
        <taxon>Pleosporales</taxon>
        <taxon>Pleosporineae</taxon>
        <taxon>Phaeosphaeriaceae</taxon>
        <taxon>Parastagonospora</taxon>
    </lineage>
</organism>
<accession>Q0V2R4</accession>
<dbReference type="EMBL" id="CH445326">
    <property type="protein sequence ID" value="EAT91349.2"/>
    <property type="status" value="ALT_INIT"/>
    <property type="molecule type" value="Genomic_DNA"/>
</dbReference>
<dbReference type="RefSeq" id="XP_001792333.1">
    <property type="nucleotide sequence ID" value="XM_001792281.1"/>
</dbReference>
<dbReference type="SMR" id="Q0V2R4"/>
<dbReference type="FunCoup" id="Q0V2R4">
    <property type="interactions" value="308"/>
</dbReference>
<dbReference type="STRING" id="321614.Q0V2R4"/>
<dbReference type="GeneID" id="5969178"/>
<dbReference type="KEGG" id="pno:SNOG_01700"/>
<dbReference type="VEuPathDB" id="FungiDB:JI435_017000"/>
<dbReference type="eggNOG" id="ENOG502RY6R">
    <property type="taxonomic scope" value="Eukaryota"/>
</dbReference>
<dbReference type="InParanoid" id="Q0V2R4"/>
<dbReference type="OMA" id="NAEQEGH"/>
<dbReference type="OrthoDB" id="1743802at2759"/>
<dbReference type="Proteomes" id="UP000001055">
    <property type="component" value="Unassembled WGS sequence"/>
</dbReference>
<dbReference type="GO" id="GO:0005730">
    <property type="term" value="C:nucleolus"/>
    <property type="evidence" value="ECO:0000318"/>
    <property type="project" value="GO_Central"/>
</dbReference>
<dbReference type="GO" id="GO:0030687">
    <property type="term" value="C:preribosome, large subunit precursor"/>
    <property type="evidence" value="ECO:0000318"/>
    <property type="project" value="GO_Central"/>
</dbReference>
<dbReference type="GO" id="GO:0003729">
    <property type="term" value="F:mRNA binding"/>
    <property type="evidence" value="ECO:0000318"/>
    <property type="project" value="GO_Central"/>
</dbReference>
<dbReference type="GO" id="GO:0008298">
    <property type="term" value="P:intracellular mRNA localization"/>
    <property type="evidence" value="ECO:0000318"/>
    <property type="project" value="GO_Central"/>
</dbReference>
<dbReference type="GO" id="GO:0051028">
    <property type="term" value="P:mRNA transport"/>
    <property type="evidence" value="ECO:0007669"/>
    <property type="project" value="UniProtKB-KW"/>
</dbReference>
<dbReference type="GO" id="GO:0042273">
    <property type="term" value="P:ribosomal large subunit biogenesis"/>
    <property type="evidence" value="ECO:0000318"/>
    <property type="project" value="GO_Central"/>
</dbReference>
<dbReference type="InterPro" id="IPR037650">
    <property type="entry name" value="Loc1"/>
</dbReference>
<dbReference type="PANTHER" id="PTHR28028">
    <property type="entry name" value="60S RIBOSOMAL SUBUNIT ASSEMBLY/EXPORT PROTEIN LOC1"/>
    <property type="match status" value="1"/>
</dbReference>
<dbReference type="PANTHER" id="PTHR28028:SF1">
    <property type="entry name" value="60S RIBOSOMAL SUBUNIT ASSEMBLY_EXPORT PROTEIN LOC1"/>
    <property type="match status" value="1"/>
</dbReference>
<comment type="function">
    <text evidence="1">Required for efficient assembly and nuclear export of the 60S ribosomal subunit.</text>
</comment>
<comment type="subunit">
    <text evidence="1">Component of the 66S pre-ribosomal particle.</text>
</comment>
<comment type="subcellular location">
    <subcellularLocation>
        <location evidence="1">Nucleus</location>
        <location evidence="1">Nucleolus</location>
    </subcellularLocation>
</comment>
<comment type="similarity">
    <text evidence="4">Belongs to the LOC1 family.</text>
</comment>
<comment type="sequence caution" evidence="4">
    <conflict type="erroneous initiation">
        <sequence resource="EMBL-CDS" id="EAT91349"/>
    </conflict>
</comment>
<sequence length="198" mass="21749">MAPTKGKPSTKGKSAKLGAKSSAKSKSSASKPEGISKNRQKKLTLAKPGGAQKTKSRTKDGRKKKRVYSEKELDIPLLNGIVPAGIAKPKGEKKGKIFVDDPASMMAIMSVVNAEKEGRIESKITRARQLEEIREAKRVEAEGRRDEKDKAFEERKEGLKKKRRRSAPAKGGDDDDEGKAKKSKKDGKYKARKRVSFG</sequence>
<name>LOC1_PHANO</name>
<keyword id="KW-0175">Coiled coil</keyword>
<keyword id="KW-0509">mRNA transport</keyword>
<keyword id="KW-0539">Nucleus</keyword>
<keyword id="KW-0690">Ribosome biogenesis</keyword>
<keyword id="KW-0813">Transport</keyword>
<reference key="1">
    <citation type="journal article" date="2007" name="Plant Cell">
        <title>Dothideomycete-plant interactions illuminated by genome sequencing and EST analysis of the wheat pathogen Stagonospora nodorum.</title>
        <authorList>
            <person name="Hane J.K."/>
            <person name="Lowe R.G.T."/>
            <person name="Solomon P.S."/>
            <person name="Tan K.-C."/>
            <person name="Schoch C.L."/>
            <person name="Spatafora J.W."/>
            <person name="Crous P.W."/>
            <person name="Kodira C.D."/>
            <person name="Birren B.W."/>
            <person name="Galagan J.E."/>
            <person name="Torriani S.F.F."/>
            <person name="McDonald B.A."/>
            <person name="Oliver R.P."/>
        </authorList>
    </citation>
    <scope>NUCLEOTIDE SEQUENCE [LARGE SCALE GENOMIC DNA]</scope>
    <source>
        <strain>SN15 / ATCC MYA-4574 / FGSC 10173</strain>
    </source>
</reference>
<evidence type="ECO:0000250" key="1"/>
<evidence type="ECO:0000255" key="2"/>
<evidence type="ECO:0000256" key="3">
    <source>
        <dbReference type="SAM" id="MobiDB-lite"/>
    </source>
</evidence>
<evidence type="ECO:0000305" key="4"/>
<protein>
    <recommendedName>
        <fullName>60S ribosomal subunit assembly/export protein LOC1</fullName>
    </recommendedName>
</protein>
<feature type="chain" id="PRO_0000308800" description="60S ribosomal subunit assembly/export protein LOC1">
    <location>
        <begin position="1"/>
        <end position="198"/>
    </location>
</feature>
<feature type="region of interest" description="Disordered" evidence="3">
    <location>
        <begin position="1"/>
        <end position="70"/>
    </location>
</feature>
<feature type="region of interest" description="Disordered" evidence="3">
    <location>
        <begin position="127"/>
        <end position="198"/>
    </location>
</feature>
<feature type="coiled-coil region" evidence="2">
    <location>
        <begin position="115"/>
        <end position="135"/>
    </location>
</feature>
<feature type="compositionally biased region" description="Low complexity" evidence="3">
    <location>
        <begin position="15"/>
        <end position="31"/>
    </location>
</feature>
<feature type="compositionally biased region" description="Basic residues" evidence="3">
    <location>
        <begin position="54"/>
        <end position="66"/>
    </location>
</feature>
<feature type="compositionally biased region" description="Basic and acidic residues" evidence="3">
    <location>
        <begin position="127"/>
        <end position="157"/>
    </location>
</feature>
<feature type="compositionally biased region" description="Basic residues" evidence="3">
    <location>
        <begin position="158"/>
        <end position="167"/>
    </location>
</feature>
<feature type="compositionally biased region" description="Basic residues" evidence="3">
    <location>
        <begin position="181"/>
        <end position="198"/>
    </location>
</feature>
<gene>
    <name type="primary">LOC1</name>
    <name type="ORF">SNOG_01700</name>
</gene>
<proteinExistence type="inferred from homology"/>